<organism>
    <name type="scientific">Human astrovirus-4</name>
    <name type="common">HAstV-4</name>
    <dbReference type="NCBI Taxonomy" id="35300"/>
    <lineage>
        <taxon>Viruses</taxon>
        <taxon>Riboviria</taxon>
        <taxon>Orthornavirae</taxon>
        <taxon>Pisuviricota</taxon>
        <taxon>Stelpaviricetes</taxon>
        <taxon>Stellavirales</taxon>
        <taxon>Astroviridae</taxon>
        <taxon>Mamastrovirus</taxon>
        <taxon>Mamastrovirus 1</taxon>
    </lineage>
</organism>
<dbReference type="EMBL" id="AY720891">
    <property type="protein sequence ID" value="AAW51879.1"/>
    <property type="molecule type" value="Genomic_RNA"/>
</dbReference>
<dbReference type="SMR" id="Q3ZN05"/>
<dbReference type="Proteomes" id="UP000009176">
    <property type="component" value="Genome"/>
</dbReference>
<dbReference type="GO" id="GO:0043655">
    <property type="term" value="C:host extracellular space"/>
    <property type="evidence" value="ECO:0007669"/>
    <property type="project" value="UniProtKB-SubCell"/>
</dbReference>
<dbReference type="GO" id="GO:0039617">
    <property type="term" value="C:T=3 icosahedral viral capsid"/>
    <property type="evidence" value="ECO:0000250"/>
    <property type="project" value="UniProtKB"/>
</dbReference>
<dbReference type="GO" id="GO:0075512">
    <property type="term" value="P:clathrin-dependent endocytosis of virus by host cell"/>
    <property type="evidence" value="ECO:0000250"/>
    <property type="project" value="UniProtKB"/>
</dbReference>
<dbReference type="FunFam" id="2.60.120.20:FF:000007">
    <property type="entry name" value="Capsid polyprotein VP90"/>
    <property type="match status" value="1"/>
</dbReference>
<dbReference type="Gene3D" id="2.60.120.20">
    <property type="match status" value="1"/>
</dbReference>
<dbReference type="InterPro" id="IPR004337">
    <property type="entry name" value="Astro_capsid_N"/>
</dbReference>
<dbReference type="InterPro" id="IPR022027">
    <property type="entry name" value="Astro_capsid_p"/>
</dbReference>
<dbReference type="InterPro" id="IPR029053">
    <property type="entry name" value="Viral_coat"/>
</dbReference>
<dbReference type="Pfam" id="PF03115">
    <property type="entry name" value="Astro_capsid_N"/>
    <property type="match status" value="1"/>
</dbReference>
<dbReference type="Pfam" id="PF12226">
    <property type="entry name" value="Astro_capsid_p"/>
    <property type="match status" value="1"/>
</dbReference>
<sequence length="771" mass="85125">MASKSDKQVTVEVNNNGRSRSKSRARSQSRGRGRSVKITVNSNNKGRRQNGRNKYQSNQRVRKIVNKQLRKQGVTGPKPAICQTATATLGTIGSNTTGATEIEACILLNPVLVKDATGSTQFGPVQALGAQYSMWKLKYLNVRLTSMVGASAVDGTVVRISLNPTSTPSSTSWSGLGARKHLDVTVGKNAVFKLKPSDLGGPRDGWWLTNTNDNASDTLGPSIEIHTLGQTMSSYQNTQFTGGLFLVGLSSAWCFTGYAANPNLVNLVKSTDKSVDVTFEGSAGTPLIMNVPEHSHFARMAVEHSSLSTTLSRAGGESSSDTVWQVLNTAVSAAELVTPPPFNWLVKGGWWFVKLIAGRARTGARRFYVYPSYQDALSNKPALCTGGVSTYTRQSNPVRTTLQFTQMNQPSLGRGATPATLGRSIPEPGDQFKVIMTVGALVQPNRSDTQNWLFKTVTPPTGHDAARVGWNTQHYLTIQGFLLIDSLEWLTPNLQESQEPPLIPELGVYIGIHKKALVYFMQQYVNPHTNNKHQVSSIFLIKPTENFSVTNYMSYFFRESQSDQNVANLKIRPQTWQQTVNFQRGKWYLVTNTAIRNGPPPSGWVWDNIELTNESIYYADQVLAHFINPPPQNSKIYFEVHTTMPQSRARSIGLEEDQTDNWQEPDEDLQTSTEESDYETDSLEDESDDEDSNTCRELVINTLVNQGISRERATYIGMSAYPNVEWGSGEQSTSQHIQEISSDDVGAGAHYSCVCERKQQSLNQGSRGHAE</sequence>
<accession>Q3ZN05</accession>
<reference key="1">
    <citation type="submission" date="2004-08" db="EMBL/GenBank/DDBJ databases">
        <title>Molecular characterization of human astrovirus type 4.</title>
        <authorList>
            <person name="Barthel J."/>
            <person name="Rethwilm A."/>
            <person name="Rohayem J."/>
        </authorList>
    </citation>
    <scope>NUCLEOTIDE SEQUENCE [GENOMIC RNA]</scope>
</reference>
<organismHost>
    <name type="scientific">Homo sapiens</name>
    <name type="common">Human</name>
    <dbReference type="NCBI Taxonomy" id="9606"/>
</organismHost>
<protein>
    <recommendedName>
        <fullName>Capsid polyprotein VP90</fullName>
    </recommendedName>
    <component>
        <recommendedName>
            <fullName>Capsid polyprotein VP70</fullName>
        </recommendedName>
    </component>
    <component>
        <recommendedName>
            <fullName>Core protein VP34</fullName>
        </recommendedName>
    </component>
    <component>
        <recommendedName>
            <fullName>Spike protein VP27</fullName>
        </recommendedName>
    </component>
    <component>
        <recommendedName>
            <fullName>Spike protein VP25</fullName>
        </recommendedName>
    </component>
</protein>
<feature type="chain" id="PRO_0000320234" description="Capsid polyprotein VP90">
    <location>
        <begin position="1"/>
        <end position="771"/>
    </location>
</feature>
<feature type="chain" id="PRO_0000419566" description="Capsid polyprotein VP70" evidence="4">
    <location>
        <begin position="1"/>
        <end position="657"/>
    </location>
</feature>
<feature type="chain" id="PRO_0000419567" description="Core protein VP34" evidence="4">
    <location>
        <begin position="1"/>
        <end position="313"/>
    </location>
</feature>
<feature type="chain" id="PRO_0000419568" description="Spike protein VP27" evidence="4">
    <location>
        <begin position="394"/>
        <end position="648"/>
    </location>
</feature>
<feature type="chain" id="PRO_0000419569" description="Spike protein VP25" evidence="4">
    <location>
        <begin position="424"/>
        <end position="648"/>
    </location>
</feature>
<feature type="region of interest" description="Basic" evidence="3">
    <location>
        <begin position="1"/>
        <end position="70"/>
    </location>
</feature>
<feature type="region of interest" description="Disordered" evidence="5">
    <location>
        <begin position="1"/>
        <end position="59"/>
    </location>
</feature>
<feature type="region of interest" description="Inner core" evidence="3">
    <location>
        <begin position="71"/>
        <end position="263"/>
    </location>
</feature>
<feature type="region of interest" description="Core attachment" evidence="3">
    <location>
        <begin position="394"/>
        <end position="423"/>
    </location>
</feature>
<feature type="region of interest" description="P2 globular domain" evidence="3">
    <location>
        <begin position="424"/>
        <end position="648"/>
    </location>
</feature>
<feature type="region of interest" description="Acidic" evidence="3">
    <location>
        <begin position="649"/>
        <end position="771"/>
    </location>
</feature>
<feature type="region of interest" description="Disordered" evidence="5">
    <location>
        <begin position="653"/>
        <end position="694"/>
    </location>
</feature>
<feature type="compositionally biased region" description="Basic residues" evidence="5">
    <location>
        <begin position="19"/>
        <end position="35"/>
    </location>
</feature>
<feature type="compositionally biased region" description="Acidic residues" evidence="5">
    <location>
        <begin position="654"/>
        <end position="692"/>
    </location>
</feature>
<feature type="site" description="Cleavage" evidence="3">
    <location>
        <begin position="313"/>
        <end position="314"/>
    </location>
</feature>
<feature type="site" description="Cleavage" evidence="3">
    <location>
        <begin position="393"/>
        <end position="394"/>
    </location>
</feature>
<feature type="site" description="Cleavage" evidence="3">
    <location>
        <begin position="423"/>
        <end position="424"/>
    </location>
</feature>
<feature type="site" description="Cleavage" evidence="3">
    <location>
        <begin position="657"/>
        <end position="658"/>
    </location>
</feature>
<name>CAPSD_HASV4</name>
<evidence type="ECO:0000250" key="1">
    <source>
        <dbReference type="UniProtKB" id="O12792"/>
    </source>
</evidence>
<evidence type="ECO:0000250" key="2">
    <source>
        <dbReference type="UniProtKB" id="Q82446"/>
    </source>
</evidence>
<evidence type="ECO:0000250" key="3">
    <source>
        <dbReference type="UniProtKB" id="Q9IFX1"/>
    </source>
</evidence>
<evidence type="ECO:0000255" key="4"/>
<evidence type="ECO:0000256" key="5">
    <source>
        <dbReference type="SAM" id="MobiDB-lite"/>
    </source>
</evidence>
<evidence type="ECO:0000305" key="6"/>
<comment type="function">
    <molecule>Capsid polyprotein VP90</molecule>
    <text evidence="3">The capsid polyprotein VP90 self-assembles and undergoes a proteolytic cleavage by host caspases to yield the immature VP70 virion.</text>
</comment>
<comment type="function">
    <molecule>Capsid polyprotein VP70</molecule>
    <text evidence="3">The immature virion is composed of 180 VP70 subunits with 90 dimeric spikes and displays a T=3 icosahedral symmetry (By similarity). During maturation, VP70 undergoes a loss of 60 peripentonal spikes, which likely plays an important role in viral infectivity (By similarity).</text>
</comment>
<comment type="function">
    <molecule>Core protein VP34</molecule>
    <text evidence="1">Self-assembles to form an icosahedral capsid with a T=3 symmetry, about 43 nm in diameter (By similarity). This forms contains only 30 spikes located on the icosahedral 2-fold axes (By similarity).</text>
</comment>
<comment type="function">
    <molecule>Spike protein VP27</molecule>
    <text evidence="1 3">VP25 and VP27 Forms the spikes at the surface of the virion (By similarity). This forms contains only 30 spikes located on the icosahedral 2-fold axes (By similarity). Plays a role in the attachment to target host cell (By similarity). This attachment induces virion internalization through clathrin-dependent endocytosis (By similarity).</text>
</comment>
<comment type="function">
    <molecule>Spike protein VP25</molecule>
    <text evidence="1 2 3">VP25 and VP27 Forms the spikes at the surface of the virion (By similarity). This forms contains only 30 spikes located on the icosahedral 2-fold axes (By similarity). Plays a role in the attachment to target host cell (By similarity). This attachment induces virion internalization through clathrin-dependent endocytosis (By similarity).</text>
</comment>
<comment type="subunit">
    <molecule>Spike protein VP25</molecule>
    <text evidence="3">Heterodimer with spike protein VP27 (By similarity). The spikes form a globular dimer with 30 spikes covering the mature virion (By similarity). Spike protein VP25 that lacks the core attachment region may need to dimerize with spike protein VP27 to remain stably bound to the viral particle (By similarity).</text>
</comment>
<comment type="subunit">
    <molecule>Spike protein VP27</molecule>
    <text evidence="3">Heterodimer with spike protein VP25 (By similarity). The spikes form a globular dimer with 30 spikes covering the mature virion (By similarity). Spike protein VP25 that lacks the core attachment region may need to dimerize with spike protein VP27 to remain stably bound to the viral particle (By similarity).</text>
</comment>
<comment type="subcellular location">
    <molecule>Capsid polyprotein VP90</molecule>
    <subcellularLocation>
        <location evidence="3">Virion</location>
    </subcellularLocation>
    <text evidence="3">Immature capsid.</text>
</comment>
<comment type="subcellular location">
    <molecule>Capsid polyprotein VP70</molecule>
    <subcellularLocation>
        <location evidence="3">Virion</location>
    </subcellularLocation>
    <text evidence="3">Immature capsid after cleavage by host caspases.</text>
</comment>
<comment type="subcellular location">
    <molecule>Core protein VP34</molecule>
    <subcellularLocation>
        <location evidence="1">Virion</location>
    </subcellularLocation>
    <text evidence="1">Capsid.</text>
</comment>
<comment type="subcellular location">
    <molecule>Spike protein VP27</molecule>
    <subcellularLocation>
        <location evidence="1">Virion</location>
    </subcellularLocation>
    <text evidence="1">Capsid.</text>
</comment>
<comment type="subcellular location">
    <molecule>Spike protein VP25</molecule>
    <subcellularLocation>
        <location evidence="1">Host extracellular space</location>
    </subcellularLocation>
    <subcellularLocation>
        <location>Virion</location>
    </subcellularLocation>
    <text evidence="1 6">Capsid (By similarity). Spike protein VP25 that lacks the core attachment region may need to dimerize with spike protein VP27 to remain stably bound to the viral particle (Probable).</text>
</comment>
<comment type="domain">
    <molecule>Spike protein VP27</molecule>
    <text evidence="3">Contains the core attachment region and the P2 globular region.</text>
</comment>
<comment type="domain">
    <molecule>Spike protein VP25</molecule>
    <text evidence="3">Contains the P2 globular region (By similarity). The core attachment region is lost by cleavage (By similarity).</text>
</comment>
<comment type="PTM">
    <molecule>Capsid polyprotein VP90</molecule>
    <text evidence="3">Specific enzymatic cleavages by the host yield mature proteins. VP90 acidic C-terminal domain is eliminated from the immature virion by host caspases during viral maturation giving rise to virions composed of VP70 (By similarity). The virus can then dissociate from cellular membranes and exit the cell (By similarity). Further cleavages by host extracellular proteases occur resulting in the three structural proteins VP34, VP27 and VP25 and conferring infectivity (By similarity).</text>
</comment>
<comment type="similarity">
    <text evidence="6">Belongs to the astroviridae capsid polyprotein family.</text>
</comment>
<keyword id="KW-0167">Capsid protein</keyword>
<keyword id="KW-1165">Clathrin-mediated endocytosis of virus by host</keyword>
<keyword id="KW-1142">T=3 icosahedral capsid protein</keyword>
<keyword id="KW-1162">Viral penetration into host cytoplasm</keyword>
<keyword id="KW-0946">Virion</keyword>
<keyword id="KW-1164">Virus endocytosis by host</keyword>
<keyword id="KW-1160">Virus entry into host cell</keyword>
<gene>
    <name type="ORF">ORF2</name>
</gene>
<proteinExistence type="inferred from homology"/>